<proteinExistence type="evidence at protein level"/>
<keyword id="KW-1003">Cell membrane</keyword>
<keyword id="KW-0903">Direct protein sequencing</keyword>
<keyword id="KW-0472">Membrane</keyword>
<keyword id="KW-0520">NAD</keyword>
<keyword id="KW-0560">Oxidoreductase</keyword>
<keyword id="KW-1185">Reference proteome</keyword>
<keyword id="KW-0816">Tricarboxylic acid cycle</keyword>
<comment type="function">
    <text evidence="6">Malate dehydrogenase; catalyzes a reversible NAD-dependent dehydrogenase reaction involved in central metabolism and redox homeostasis.</text>
</comment>
<comment type="catalytic activity">
    <reaction evidence="3">
        <text>(S)-malate + NAD(+) = oxaloacetate + NADH + H(+)</text>
        <dbReference type="Rhea" id="RHEA:21432"/>
        <dbReference type="ChEBI" id="CHEBI:15378"/>
        <dbReference type="ChEBI" id="CHEBI:15589"/>
        <dbReference type="ChEBI" id="CHEBI:16452"/>
        <dbReference type="ChEBI" id="CHEBI:57540"/>
        <dbReference type="ChEBI" id="CHEBI:57945"/>
        <dbReference type="EC" id="1.1.1.37"/>
    </reaction>
</comment>
<comment type="biophysicochemical properties">
    <kinetics>
        <KM evidence="3">25 uM for NADH for the native enzyme</KM>
        <KM evidence="3">29 uM for NADH for the recombinant enzyme</KM>
        <KM evidence="3">126 uM for oxaloacetate for the native enzyme</KM>
        <KM evidence="3">289 uM for oxaloacetate for the recombinant enzyme</KM>
        <KM evidence="3">1810 uM for malate for the native enzyme</KM>
        <KM evidence="3">266 uM for malate for the recombinant enzyme</KM>
    </kinetics>
    <phDependence>
        <text evidence="3">Optimum pH is 7.41 for the native enzyme.</text>
    </phDependence>
</comment>
<comment type="subunit">
    <text evidence="3">Monomer.</text>
</comment>
<comment type="subcellular location">
    <subcellularLocation>
        <location evidence="3">Cell membrane</location>
        <topology evidence="3">Peripheral membrane protein</topology>
    </subcellularLocation>
</comment>
<comment type="tissue specificity">
    <text evidence="3">Expressed constitutively in roots.</text>
</comment>
<comment type="similarity">
    <text evidence="5">Belongs to the LDH/MDH superfamily. MDH type 2 family.</text>
</comment>
<accession>Q08062</accession>
<accession>B2ZAF9</accession>
<accession>C4IZW9</accession>
<dbReference type="EC" id="1.1.1.37" evidence="3"/>
<dbReference type="EMBL" id="AF007581">
    <property type="protein sequence ID" value="AAB64290.1"/>
    <property type="molecule type" value="mRNA"/>
</dbReference>
<dbReference type="EMBL" id="EU625276">
    <property type="protein sequence ID" value="ACD02021.1"/>
    <property type="molecule type" value="mRNA"/>
</dbReference>
<dbReference type="EMBL" id="BT084116">
    <property type="protein sequence ID" value="ACR34469.1"/>
    <property type="molecule type" value="mRNA"/>
</dbReference>
<dbReference type="EMBL" id="M95069">
    <property type="protein sequence ID" value="AAA18556.2"/>
    <property type="molecule type" value="mRNA"/>
</dbReference>
<dbReference type="PIR" id="T02935">
    <property type="entry name" value="T02935"/>
</dbReference>
<dbReference type="PIR" id="T03650">
    <property type="entry name" value="T03650"/>
</dbReference>
<dbReference type="RefSeq" id="NP_001105603.1">
    <property type="nucleotide sequence ID" value="NM_001112133.2"/>
</dbReference>
<dbReference type="SMR" id="Q08062"/>
<dbReference type="FunCoup" id="Q08062">
    <property type="interactions" value="2488"/>
</dbReference>
<dbReference type="STRING" id="4577.Q08062"/>
<dbReference type="PaxDb" id="4577-GRMZM2G415359_P02"/>
<dbReference type="ProMEX" id="Q08062"/>
<dbReference type="EnsemblPlants" id="Zm00001eb045790_T004">
    <property type="protein sequence ID" value="Zm00001eb045790_P004"/>
    <property type="gene ID" value="Zm00001eb045790"/>
</dbReference>
<dbReference type="GeneID" id="542598"/>
<dbReference type="Gramene" id="Zm00001eb045790_T004">
    <property type="protein sequence ID" value="Zm00001eb045790_P004"/>
    <property type="gene ID" value="Zm00001eb045790"/>
</dbReference>
<dbReference type="KEGG" id="zma:542598"/>
<dbReference type="eggNOG" id="KOG1496">
    <property type="taxonomic scope" value="Eukaryota"/>
</dbReference>
<dbReference type="HOGENOM" id="CLU_040727_2_0_1"/>
<dbReference type="InParanoid" id="Q08062"/>
<dbReference type="OMA" id="GMIGSNM"/>
<dbReference type="OrthoDB" id="4069699at2759"/>
<dbReference type="Proteomes" id="UP000007305">
    <property type="component" value="Chromosome 1"/>
</dbReference>
<dbReference type="ExpressionAtlas" id="Q08062">
    <property type="expression patterns" value="baseline and differential"/>
</dbReference>
<dbReference type="GO" id="GO:0005886">
    <property type="term" value="C:plasma membrane"/>
    <property type="evidence" value="ECO:0007669"/>
    <property type="project" value="UniProtKB-SubCell"/>
</dbReference>
<dbReference type="GO" id="GO:0030060">
    <property type="term" value="F:L-malate dehydrogenase (NAD+) activity"/>
    <property type="evidence" value="ECO:0000318"/>
    <property type="project" value="GO_Central"/>
</dbReference>
<dbReference type="GO" id="GO:0006108">
    <property type="term" value="P:malate metabolic process"/>
    <property type="evidence" value="ECO:0000318"/>
    <property type="project" value="GO_Central"/>
</dbReference>
<dbReference type="GO" id="GO:0006734">
    <property type="term" value="P:NADH metabolic process"/>
    <property type="evidence" value="ECO:0000318"/>
    <property type="project" value="GO_Central"/>
</dbReference>
<dbReference type="GO" id="GO:0006107">
    <property type="term" value="P:oxaloacetate metabolic process"/>
    <property type="evidence" value="ECO:0000318"/>
    <property type="project" value="GO_Central"/>
</dbReference>
<dbReference type="GO" id="GO:0006099">
    <property type="term" value="P:tricarboxylic acid cycle"/>
    <property type="evidence" value="ECO:0000318"/>
    <property type="project" value="GO_Central"/>
</dbReference>
<dbReference type="CDD" id="cd01336">
    <property type="entry name" value="MDH_cytoplasmic_cytosolic"/>
    <property type="match status" value="1"/>
</dbReference>
<dbReference type="FunFam" id="3.40.50.720:FF:000010">
    <property type="entry name" value="Malate dehydrogenase"/>
    <property type="match status" value="1"/>
</dbReference>
<dbReference type="FunFam" id="3.90.110.10:FF:000002">
    <property type="entry name" value="Malate dehydrogenase"/>
    <property type="match status" value="1"/>
</dbReference>
<dbReference type="Gene3D" id="3.90.110.10">
    <property type="entry name" value="Lactate dehydrogenase/glycoside hydrolase, family 4, C-terminal"/>
    <property type="match status" value="1"/>
</dbReference>
<dbReference type="Gene3D" id="3.40.50.720">
    <property type="entry name" value="NAD(P)-binding Rossmann-like Domain"/>
    <property type="match status" value="1"/>
</dbReference>
<dbReference type="InterPro" id="IPR001557">
    <property type="entry name" value="L-lactate/malate_DH"/>
</dbReference>
<dbReference type="InterPro" id="IPR022383">
    <property type="entry name" value="Lactate/malate_DH_C"/>
</dbReference>
<dbReference type="InterPro" id="IPR001236">
    <property type="entry name" value="Lactate/malate_DH_N"/>
</dbReference>
<dbReference type="InterPro" id="IPR015955">
    <property type="entry name" value="Lactate_DH/Glyco_Ohase_4_C"/>
</dbReference>
<dbReference type="InterPro" id="IPR001252">
    <property type="entry name" value="Malate_DH_AS"/>
</dbReference>
<dbReference type="InterPro" id="IPR011274">
    <property type="entry name" value="Malate_DH_NAD-dep_euk"/>
</dbReference>
<dbReference type="InterPro" id="IPR010945">
    <property type="entry name" value="Malate_DH_type2"/>
</dbReference>
<dbReference type="InterPro" id="IPR036291">
    <property type="entry name" value="NAD(P)-bd_dom_sf"/>
</dbReference>
<dbReference type="NCBIfam" id="TIGR01759">
    <property type="entry name" value="MalateDH-SF1"/>
    <property type="match status" value="1"/>
</dbReference>
<dbReference type="NCBIfam" id="TIGR01758">
    <property type="entry name" value="MDH_euk_cyt"/>
    <property type="match status" value="1"/>
</dbReference>
<dbReference type="NCBIfam" id="NF003916">
    <property type="entry name" value="PRK05442.1"/>
    <property type="match status" value="1"/>
</dbReference>
<dbReference type="PANTHER" id="PTHR23382">
    <property type="entry name" value="MALATE DEHYDROGENASE"/>
    <property type="match status" value="1"/>
</dbReference>
<dbReference type="Pfam" id="PF02866">
    <property type="entry name" value="Ldh_1_C"/>
    <property type="match status" value="1"/>
</dbReference>
<dbReference type="Pfam" id="PF00056">
    <property type="entry name" value="Ldh_1_N"/>
    <property type="match status" value="1"/>
</dbReference>
<dbReference type="PIRSF" id="PIRSF000102">
    <property type="entry name" value="Lac_mal_DH"/>
    <property type="match status" value="1"/>
</dbReference>
<dbReference type="SUPFAM" id="SSF56327">
    <property type="entry name" value="LDH C-terminal domain-like"/>
    <property type="match status" value="1"/>
</dbReference>
<dbReference type="SUPFAM" id="SSF51735">
    <property type="entry name" value="NAD(P)-binding Rossmann-fold domains"/>
    <property type="match status" value="1"/>
</dbReference>
<dbReference type="PROSITE" id="PS00068">
    <property type="entry name" value="MDH"/>
    <property type="match status" value="1"/>
</dbReference>
<sequence>MAKEPMRVLVTGAAGQIGYALVPMIARGVMLGADQPVILHMLDIPPAAEALNGVKMELVDAAFPLLKGVVATTDVVEACTGVNVAVMVGGFPRKEGMERKDVMSKNVSIYKSQASALEAHAAPNCKVLVVANPANTNALILKEFAPSIPEKNVTCLTRLDHNRALGQISERLNVQVSDVKNVIIWGNHSSSQYPDVNHATVKTSTGEKPVRELVSDDEWLNGEFITTVQQRGAAIIKARKFSSALSAASSACDHIRDWVLGTPEGTFVSMGVYSDGSYGVPSGLIYSFPVTCSGGEWKIVQGLPIDEFSRKKMDATAQELTEEKTLAYSCLE</sequence>
<organism>
    <name type="scientific">Zea mays</name>
    <name type="common">Maize</name>
    <dbReference type="NCBI Taxonomy" id="4577"/>
    <lineage>
        <taxon>Eukaryota</taxon>
        <taxon>Viridiplantae</taxon>
        <taxon>Streptophyta</taxon>
        <taxon>Embryophyta</taxon>
        <taxon>Tracheophyta</taxon>
        <taxon>Spermatophyta</taxon>
        <taxon>Magnoliopsida</taxon>
        <taxon>Liliopsida</taxon>
        <taxon>Poales</taxon>
        <taxon>Poaceae</taxon>
        <taxon>PACMAD clade</taxon>
        <taxon>Panicoideae</taxon>
        <taxon>Andropogonodae</taxon>
        <taxon>Andropogoneae</taxon>
        <taxon>Tripsacinae</taxon>
        <taxon>Zea</taxon>
    </lineage>
</organism>
<reference key="1">
    <citation type="submission" date="1997-07" db="EMBL/GenBank/DDBJ databases">
        <title>Cloning and characterization of cytoplasmic malate dehydrogenase over-expressed in hybrid maize.</title>
        <authorList>
            <person name="Hu J."/>
            <person name="Zhao X."/>
            <person name="Yuan Z."/>
            <person name="Qian X."/>
            <person name="Yang J."/>
        </authorList>
    </citation>
    <scope>NUCLEOTIDE SEQUENCE [MRNA]</scope>
    <source>
        <strain>cv. Yedan 4</strain>
        <tissue>Leaf</tissue>
    </source>
</reference>
<reference key="2">
    <citation type="submission" date="2008-04" db="EMBL/GenBank/DDBJ databases">
        <title>Cloning of Malate Dehydrogenase from Zea mays and Construction of its RNAi Expression Vector.</title>
        <authorList>
            <person name="Wang J."/>
            <person name="Cheng B."/>
            <person name="Xiang Y."/>
            <person name="Zhu S."/>
            <person name="Jiang H."/>
            <person name="Chen D."/>
            <person name="Zhang Y."/>
        </authorList>
    </citation>
    <scope>NUCLEOTIDE SEQUENCE [MRNA]</scope>
    <source>
        <tissue>Leaf</tissue>
    </source>
</reference>
<reference key="3">
    <citation type="journal article" date="2009" name="PLoS Genet.">
        <title>Sequencing, mapping, and analysis of 27,455 maize full-length cDNAs.</title>
        <authorList>
            <person name="Soderlund C."/>
            <person name="Descour A."/>
            <person name="Kudrna D."/>
            <person name="Bomhoff M."/>
            <person name="Boyd L."/>
            <person name="Currie J."/>
            <person name="Angelova A."/>
            <person name="Collura K."/>
            <person name="Wissotski M."/>
            <person name="Ashley E."/>
            <person name="Morrow D."/>
            <person name="Fernandes J."/>
            <person name="Walbot V."/>
            <person name="Yu Y."/>
        </authorList>
    </citation>
    <scope>NUCLEOTIDE SEQUENCE [LARGE SCALE MRNA]</scope>
    <source>
        <strain>cv. B73</strain>
    </source>
</reference>
<reference key="4">
    <citation type="journal article" date="1993" name="Plant Physiol.">
        <title>Partial sequence analysis of 130 randomly selected maize cDNA clones.</title>
        <authorList>
            <person name="Keith C.S."/>
            <person name="Hoang D.O."/>
            <person name="Barrett B.M."/>
            <person name="Feigelman B."/>
            <person name="Nelson M.C."/>
            <person name="Thai H."/>
            <person name="Baysdorfer C."/>
        </authorList>
    </citation>
    <scope>NUCLEOTIDE SEQUENCE [MRNA] OF 4-73</scope>
    <source>
        <strain>cv. B73</strain>
        <tissue>Leaf</tissue>
        <tissue>Sheath</tissue>
    </source>
</reference>
<reference key="5">
    <citation type="journal article" date="2013" name="J. Proteomics">
        <title>Plasma membrane-associated malate dehydrogenase of maize (Zea mays L.) roots: native versus recombinant protein.</title>
        <authorList>
            <person name="Menckhoff L."/>
            <person name="Mielke-Ehret N."/>
            <person name="Buck F."/>
            <person name="Vuletic M."/>
            <person name="Luethje S."/>
        </authorList>
    </citation>
    <scope>FUNCTION</scope>
    <scope>CATALYTIC ACTIVITY</scope>
    <scope>PARTIAL PROTEIN SEQUENCE</scope>
    <scope>IDENTIFICATION BY MASS SPECTROMETRY</scope>
    <scope>SUBCELLULAR LOCATION</scope>
    <scope>BIOPHYSICOCHEMICAL PROPERTIES</scope>
    <scope>TISSUE SPECIFICITY</scope>
    <scope>SUBUNIT</scope>
</reference>
<name>MDHC_MAIZE</name>
<protein>
    <recommendedName>
        <fullName evidence="4">Malate dehydrogenase, cytoplasmic</fullName>
        <ecNumber evidence="3">1.1.1.37</ecNumber>
    </recommendedName>
</protein>
<feature type="chain" id="PRO_0000113415" description="Malate dehydrogenase, cytoplasmic">
    <location>
        <begin position="1"/>
        <end position="332"/>
    </location>
</feature>
<feature type="active site" description="Proton acceptor" evidence="1">
    <location>
        <position position="188"/>
    </location>
</feature>
<feature type="binding site" evidence="2">
    <location>
        <begin position="16"/>
        <end position="17"/>
    </location>
    <ligand>
        <name>NAD(+)</name>
        <dbReference type="ChEBI" id="CHEBI:57540"/>
    </ligand>
</feature>
<feature type="binding site" evidence="2">
    <location>
        <position position="43"/>
    </location>
    <ligand>
        <name>NAD(+)</name>
        <dbReference type="ChEBI" id="CHEBI:57540"/>
    </ligand>
</feature>
<feature type="binding site" evidence="2">
    <location>
        <position position="90"/>
    </location>
    <ligand>
        <name>NAD(+)</name>
        <dbReference type="ChEBI" id="CHEBI:57540"/>
    </ligand>
</feature>
<feature type="binding site" evidence="2">
    <location>
        <position position="99"/>
    </location>
    <ligand>
        <name>oxaloacetate</name>
        <dbReference type="ChEBI" id="CHEBI:16452"/>
    </ligand>
</feature>
<feature type="binding site" evidence="2">
    <location>
        <position position="113"/>
    </location>
    <ligand>
        <name>NAD(+)</name>
        <dbReference type="ChEBI" id="CHEBI:57540"/>
    </ligand>
</feature>
<feature type="binding site" evidence="2">
    <location>
        <position position="132"/>
    </location>
    <ligand>
        <name>NAD(+)</name>
        <dbReference type="ChEBI" id="CHEBI:57540"/>
    </ligand>
</feature>
<feature type="binding site" evidence="2">
    <location>
        <position position="132"/>
    </location>
    <ligand>
        <name>oxaloacetate</name>
        <dbReference type="ChEBI" id="CHEBI:16452"/>
    </ligand>
</feature>
<feature type="binding site" evidence="2">
    <location>
        <position position="163"/>
    </location>
    <ligand>
        <name>oxaloacetate</name>
        <dbReference type="ChEBI" id="CHEBI:16452"/>
    </ligand>
</feature>
<feature type="binding site" evidence="2">
    <location>
        <position position="188"/>
    </location>
    <ligand>
        <name>oxaloacetate</name>
        <dbReference type="ChEBI" id="CHEBI:16452"/>
    </ligand>
</feature>
<feature type="binding site" evidence="2">
    <location>
        <position position="243"/>
    </location>
    <ligand>
        <name>oxaloacetate</name>
        <dbReference type="ChEBI" id="CHEBI:16452"/>
    </ligand>
</feature>
<feature type="sequence conflict" description="In Ref. 2; ACD02021." evidence="5" ref="2">
    <original>K</original>
    <variation>E</variation>
    <location>
        <position position="202"/>
    </location>
</feature>
<feature type="sequence conflict" description="In Ref. 2; ACD02021." evidence="5" ref="2">
    <original>H</original>
    <variation>Y</variation>
    <location>
        <position position="254"/>
    </location>
</feature>
<evidence type="ECO:0000250" key="1">
    <source>
        <dbReference type="UniProtKB" id="P11708"/>
    </source>
</evidence>
<evidence type="ECO:0000250" key="2">
    <source>
        <dbReference type="UniProtKB" id="P93819"/>
    </source>
</evidence>
<evidence type="ECO:0000269" key="3">
    <source>
    </source>
</evidence>
<evidence type="ECO:0000303" key="4">
    <source ref="1"/>
</evidence>
<evidence type="ECO:0000305" key="5"/>
<evidence type="ECO:0000305" key="6">
    <source>
    </source>
</evidence>